<dbReference type="EMBL" id="L43967">
    <property type="protein sequence ID" value="AAC72449.1"/>
    <property type="molecule type" value="Genomic_DNA"/>
</dbReference>
<dbReference type="PIR" id="C64247">
    <property type="entry name" value="C64247"/>
</dbReference>
<dbReference type="RefSeq" id="WP_009885604.1">
    <property type="nucleotide sequence ID" value="NC_000908.2"/>
</dbReference>
<dbReference type="SMR" id="P47667"/>
<dbReference type="STRING" id="243273.MG_428"/>
<dbReference type="GeneID" id="88282609"/>
<dbReference type="KEGG" id="mge:MG_428"/>
<dbReference type="eggNOG" id="COG1595">
    <property type="taxonomic scope" value="Bacteria"/>
</dbReference>
<dbReference type="HOGENOM" id="CLU_1561219_0_0_14"/>
<dbReference type="InParanoid" id="P47667"/>
<dbReference type="OrthoDB" id="9909569at2"/>
<dbReference type="BioCyc" id="MGEN243273:G1GJ2-522-MONOMER"/>
<dbReference type="Proteomes" id="UP000000807">
    <property type="component" value="Chromosome"/>
</dbReference>
<dbReference type="GO" id="GO:0003700">
    <property type="term" value="F:DNA-binding transcription factor activity"/>
    <property type="evidence" value="ECO:0007669"/>
    <property type="project" value="InterPro"/>
</dbReference>
<dbReference type="GO" id="GO:0006352">
    <property type="term" value="P:DNA-templated transcription initiation"/>
    <property type="evidence" value="ECO:0007669"/>
    <property type="project" value="InterPro"/>
</dbReference>
<dbReference type="Gene3D" id="1.10.10.10">
    <property type="entry name" value="Winged helix-like DNA-binding domain superfamily/Winged helix DNA-binding domain"/>
    <property type="match status" value="1"/>
</dbReference>
<dbReference type="InterPro" id="IPR014284">
    <property type="entry name" value="RNA_pol_sigma-70_dom"/>
</dbReference>
<dbReference type="InterPro" id="IPR013324">
    <property type="entry name" value="RNA_pol_sigma_r3/r4-like"/>
</dbReference>
<dbReference type="InterPro" id="IPR000792">
    <property type="entry name" value="Tscrpt_reg_LuxR_C"/>
</dbReference>
<dbReference type="InterPro" id="IPR036388">
    <property type="entry name" value="WH-like_DNA-bd_sf"/>
</dbReference>
<dbReference type="NCBIfam" id="TIGR02937">
    <property type="entry name" value="sigma70-ECF"/>
    <property type="match status" value="1"/>
</dbReference>
<dbReference type="Pfam" id="PF00196">
    <property type="entry name" value="GerE"/>
    <property type="match status" value="1"/>
</dbReference>
<dbReference type="SUPFAM" id="SSF88659">
    <property type="entry name" value="Sigma3 and sigma4 domains of RNA polymerase sigma factors"/>
    <property type="match status" value="1"/>
</dbReference>
<organism>
    <name type="scientific">Mycoplasma genitalium (strain ATCC 33530 / DSM 19775 / NCTC 10195 / G37)</name>
    <name type="common">Mycoplasmoides genitalium</name>
    <dbReference type="NCBI Taxonomy" id="243273"/>
    <lineage>
        <taxon>Bacteria</taxon>
        <taxon>Bacillati</taxon>
        <taxon>Mycoplasmatota</taxon>
        <taxon>Mycoplasmoidales</taxon>
        <taxon>Mycoplasmoidaceae</taxon>
        <taxon>Mycoplasmoides</taxon>
    </lineage>
</organism>
<protein>
    <recommendedName>
        <fullName>Uncharacterized protein MG428</fullName>
    </recommendedName>
</protein>
<keyword id="KW-1185">Reference proteome</keyword>
<sequence length="171" mass="20259">MKNNISDVKLGLLAAKIYWKSWRFLELTEDDIISIALHAEQDSKKRFNPEFGLSFDNYLKLNGANFIRSSFRSMVNKVELLDSKSKYSLEKQNTVLNTPENYLRSLEFKEIITKAFNKAKNDQERKVFSLYVKGYKNFEIAKKLNISPRRVRYLLDLFKSYIKLLTERYGY</sequence>
<feature type="chain" id="PRO_0000210608" description="Uncharacterized protein MG428">
    <location>
        <begin position="1"/>
        <end position="171"/>
    </location>
</feature>
<gene>
    <name type="ordered locus">MG428</name>
</gene>
<accession>P47667</accession>
<reference key="1">
    <citation type="journal article" date="1995" name="Science">
        <title>The minimal gene complement of Mycoplasma genitalium.</title>
        <authorList>
            <person name="Fraser C.M."/>
            <person name="Gocayne J.D."/>
            <person name="White O."/>
            <person name="Adams M.D."/>
            <person name="Clayton R.A."/>
            <person name="Fleischmann R.D."/>
            <person name="Bult C.J."/>
            <person name="Kerlavage A.R."/>
            <person name="Sutton G.G."/>
            <person name="Kelley J.M."/>
            <person name="Fritchman J.L."/>
            <person name="Weidman J.F."/>
            <person name="Small K.V."/>
            <person name="Sandusky M."/>
            <person name="Fuhrmann J.L."/>
            <person name="Nguyen D.T."/>
            <person name="Utterback T.R."/>
            <person name="Saudek D.M."/>
            <person name="Phillips C.A."/>
            <person name="Merrick J.M."/>
            <person name="Tomb J.-F."/>
            <person name="Dougherty B.A."/>
            <person name="Bott K.F."/>
            <person name="Hu P.-C."/>
            <person name="Lucier T.S."/>
            <person name="Peterson S.N."/>
            <person name="Smith H.O."/>
            <person name="Hutchison C.A. III"/>
            <person name="Venter J.C."/>
        </authorList>
    </citation>
    <scope>NUCLEOTIDE SEQUENCE [LARGE SCALE GENOMIC DNA]</scope>
    <source>
        <strain>ATCC 33530 / DSM 19775 / NCTC 10195 / G37</strain>
    </source>
</reference>
<name>Y428_MYCGE</name>
<proteinExistence type="predicted"/>